<organism>
    <name type="scientific">Streptococcus pneumoniae (strain ATCC BAA-255 / R6)</name>
    <dbReference type="NCBI Taxonomy" id="171101"/>
    <lineage>
        <taxon>Bacteria</taxon>
        <taxon>Bacillati</taxon>
        <taxon>Bacillota</taxon>
        <taxon>Bacilli</taxon>
        <taxon>Lactobacillales</taxon>
        <taxon>Streptococcaceae</taxon>
        <taxon>Streptococcus</taxon>
    </lineage>
</organism>
<protein>
    <recommendedName>
        <fullName evidence="1">Large ribosomal subunit protein uL15</fullName>
    </recommendedName>
    <alternativeName>
        <fullName evidence="3">50S ribosomal protein L15</fullName>
    </alternativeName>
</protein>
<dbReference type="EMBL" id="AE007317">
    <property type="protein sequence ID" value="AAK99012.1"/>
    <property type="molecule type" value="Genomic_DNA"/>
</dbReference>
<dbReference type="PIR" id="H95026">
    <property type="entry name" value="H95026"/>
</dbReference>
<dbReference type="PIR" id="H97897">
    <property type="entry name" value="H97897"/>
</dbReference>
<dbReference type="RefSeq" id="NP_357802.1">
    <property type="nucleotide sequence ID" value="NC_003098.1"/>
</dbReference>
<dbReference type="RefSeq" id="WP_000766087.1">
    <property type="nucleotide sequence ID" value="NC_003098.1"/>
</dbReference>
<dbReference type="SMR" id="Q8CWV0"/>
<dbReference type="STRING" id="171101.spr0208"/>
<dbReference type="GeneID" id="45652290"/>
<dbReference type="KEGG" id="spr:spr0208"/>
<dbReference type="PATRIC" id="fig|171101.6.peg.240"/>
<dbReference type="eggNOG" id="COG0200">
    <property type="taxonomic scope" value="Bacteria"/>
</dbReference>
<dbReference type="HOGENOM" id="CLU_055188_4_2_9"/>
<dbReference type="PRO" id="PR:Q8CWV0"/>
<dbReference type="Proteomes" id="UP000000586">
    <property type="component" value="Chromosome"/>
</dbReference>
<dbReference type="GO" id="GO:0022625">
    <property type="term" value="C:cytosolic large ribosomal subunit"/>
    <property type="evidence" value="ECO:0000318"/>
    <property type="project" value="GO_Central"/>
</dbReference>
<dbReference type="GO" id="GO:0019843">
    <property type="term" value="F:rRNA binding"/>
    <property type="evidence" value="ECO:0007669"/>
    <property type="project" value="UniProtKB-UniRule"/>
</dbReference>
<dbReference type="GO" id="GO:0003735">
    <property type="term" value="F:structural constituent of ribosome"/>
    <property type="evidence" value="ECO:0000318"/>
    <property type="project" value="GO_Central"/>
</dbReference>
<dbReference type="GO" id="GO:0006412">
    <property type="term" value="P:translation"/>
    <property type="evidence" value="ECO:0007669"/>
    <property type="project" value="UniProtKB-UniRule"/>
</dbReference>
<dbReference type="FunFam" id="3.100.10.10:FF:000004">
    <property type="entry name" value="50S ribosomal protein L15"/>
    <property type="match status" value="1"/>
</dbReference>
<dbReference type="Gene3D" id="3.100.10.10">
    <property type="match status" value="1"/>
</dbReference>
<dbReference type="HAMAP" id="MF_01341">
    <property type="entry name" value="Ribosomal_uL15"/>
    <property type="match status" value="1"/>
</dbReference>
<dbReference type="InterPro" id="IPR030878">
    <property type="entry name" value="Ribosomal_uL15"/>
</dbReference>
<dbReference type="InterPro" id="IPR021131">
    <property type="entry name" value="Ribosomal_uL15/eL18"/>
</dbReference>
<dbReference type="InterPro" id="IPR036227">
    <property type="entry name" value="Ribosomal_uL15/eL18_sf"/>
</dbReference>
<dbReference type="InterPro" id="IPR005749">
    <property type="entry name" value="Ribosomal_uL15_bac-type"/>
</dbReference>
<dbReference type="InterPro" id="IPR001196">
    <property type="entry name" value="Ribosomal_uL15_CS"/>
</dbReference>
<dbReference type="NCBIfam" id="TIGR01071">
    <property type="entry name" value="rplO_bact"/>
    <property type="match status" value="1"/>
</dbReference>
<dbReference type="PANTHER" id="PTHR12934">
    <property type="entry name" value="50S RIBOSOMAL PROTEIN L15"/>
    <property type="match status" value="1"/>
</dbReference>
<dbReference type="PANTHER" id="PTHR12934:SF11">
    <property type="entry name" value="LARGE RIBOSOMAL SUBUNIT PROTEIN UL15M"/>
    <property type="match status" value="1"/>
</dbReference>
<dbReference type="Pfam" id="PF00828">
    <property type="entry name" value="Ribosomal_L27A"/>
    <property type="match status" value="1"/>
</dbReference>
<dbReference type="SUPFAM" id="SSF52080">
    <property type="entry name" value="Ribosomal proteins L15p and L18e"/>
    <property type="match status" value="1"/>
</dbReference>
<dbReference type="PROSITE" id="PS00475">
    <property type="entry name" value="RIBOSOMAL_L15"/>
    <property type="match status" value="1"/>
</dbReference>
<keyword id="KW-1185">Reference proteome</keyword>
<keyword id="KW-0687">Ribonucleoprotein</keyword>
<keyword id="KW-0689">Ribosomal protein</keyword>
<keyword id="KW-0694">RNA-binding</keyword>
<keyword id="KW-0699">rRNA-binding</keyword>
<comment type="function">
    <text evidence="1">Binds to the 23S rRNA.</text>
</comment>
<comment type="subunit">
    <text evidence="1">Part of the 50S ribosomal subunit.</text>
</comment>
<comment type="similarity">
    <text evidence="1">Belongs to the universal ribosomal protein uL15 family.</text>
</comment>
<gene>
    <name evidence="1" type="primary">rplO</name>
    <name type="ordered locus">spr0208</name>
</gene>
<accession>Q8CWV0</accession>
<proteinExistence type="inferred from homology"/>
<sequence length="146" mass="15446">MKLHELKPAEGSRKVRNRVGRGTSSGNGKTSGRGQKGQKARSGGGVRLGFEGGQTPLFRRLPKRGFTNINAKEYAIVNLDQLNVFEDGAEVTPVVLIEAGIVKAEKSGIKILGNGELTKKLTVKAAKFSKSAEEAITAKGGSVEVI</sequence>
<reference key="1">
    <citation type="journal article" date="2001" name="J. Bacteriol.">
        <title>Genome of the bacterium Streptococcus pneumoniae strain R6.</title>
        <authorList>
            <person name="Hoskins J."/>
            <person name="Alborn W.E. Jr."/>
            <person name="Arnold J."/>
            <person name="Blaszczak L.C."/>
            <person name="Burgett S."/>
            <person name="DeHoff B.S."/>
            <person name="Estrem S.T."/>
            <person name="Fritz L."/>
            <person name="Fu D.-J."/>
            <person name="Fuller W."/>
            <person name="Geringer C."/>
            <person name="Gilmour R."/>
            <person name="Glass J.S."/>
            <person name="Khoja H."/>
            <person name="Kraft A.R."/>
            <person name="Lagace R.E."/>
            <person name="LeBlanc D.J."/>
            <person name="Lee L.N."/>
            <person name="Lefkowitz E.J."/>
            <person name="Lu J."/>
            <person name="Matsushima P."/>
            <person name="McAhren S.M."/>
            <person name="McHenney M."/>
            <person name="McLeaster K."/>
            <person name="Mundy C.W."/>
            <person name="Nicas T.I."/>
            <person name="Norris F.H."/>
            <person name="O'Gara M."/>
            <person name="Peery R.B."/>
            <person name="Robertson G.T."/>
            <person name="Rockey P."/>
            <person name="Sun P.-M."/>
            <person name="Winkler M.E."/>
            <person name="Yang Y."/>
            <person name="Young-Bellido M."/>
            <person name="Zhao G."/>
            <person name="Zook C.A."/>
            <person name="Baltz R.H."/>
            <person name="Jaskunas S.R."/>
            <person name="Rosteck P.R. Jr."/>
            <person name="Skatrud P.L."/>
            <person name="Glass J.I."/>
        </authorList>
    </citation>
    <scope>NUCLEOTIDE SEQUENCE [LARGE SCALE GENOMIC DNA]</scope>
    <source>
        <strain>ATCC BAA-255 / R6</strain>
    </source>
</reference>
<evidence type="ECO:0000255" key="1">
    <source>
        <dbReference type="HAMAP-Rule" id="MF_01341"/>
    </source>
</evidence>
<evidence type="ECO:0000256" key="2">
    <source>
        <dbReference type="SAM" id="MobiDB-lite"/>
    </source>
</evidence>
<evidence type="ECO:0000305" key="3"/>
<feature type="chain" id="PRO_0000104823" description="Large ribosomal subunit protein uL15">
    <location>
        <begin position="1"/>
        <end position="146"/>
    </location>
</feature>
<feature type="region of interest" description="Disordered" evidence="2">
    <location>
        <begin position="1"/>
        <end position="51"/>
    </location>
</feature>
<feature type="compositionally biased region" description="Basic and acidic residues" evidence="2">
    <location>
        <begin position="1"/>
        <end position="13"/>
    </location>
</feature>
<feature type="compositionally biased region" description="Gly residues" evidence="2">
    <location>
        <begin position="23"/>
        <end position="35"/>
    </location>
</feature>
<feature type="compositionally biased region" description="Gly residues" evidence="2">
    <location>
        <begin position="42"/>
        <end position="51"/>
    </location>
</feature>
<name>RL15_STRR6</name>